<accession>B7ZR30</accession>
<accession>B7ZR32</accession>
<accession>Q9YHC9</accession>
<reference key="1">
    <citation type="journal article" date="1998" name="Science">
        <title>Purification and cloning of a protein kinase that phosphorylates and activates the polo-like kinase Plx1.</title>
        <authorList>
            <person name="Qian Y.W."/>
            <person name="Erikson E."/>
            <person name="Maller J.L."/>
        </authorList>
    </citation>
    <scope>NUCLEOTIDE SEQUENCE [MRNA]</scope>
    <scope>IDENTIFICATION BY MASS SPECTROMETRY</scope>
    <scope>FUNCTION</scope>
    <scope>AUTOPHOSPHORYLATION</scope>
</reference>
<reference key="2">
    <citation type="submission" date="2008-11" db="EMBL/GenBank/DDBJ databases">
        <authorList>
            <consortium name="NIH - Xenopus Gene Collection (XGC) project"/>
        </authorList>
    </citation>
    <scope>NUCLEOTIDE SEQUENCE [LARGE SCALE MRNA]</scope>
    <source>
        <tissue>Gastrula</tissue>
    </source>
</reference>
<reference key="3">
    <citation type="journal article" date="2002" name="J. Biol. Chem.">
        <title>Phosphorylation of threonine 210 and the role of serine 137 in the regulation of mammalian polo-like kinase.</title>
        <authorList>
            <person name="Jang Y.-J."/>
            <person name="Ma S."/>
            <person name="Terada Y."/>
            <person name="Erikson R.L."/>
        </authorList>
    </citation>
    <scope>FUNCTION</scope>
</reference>
<reference key="4">
    <citation type="journal article" date="2004" name="J. Biol. Chem.">
        <title>A feedback loop in the polo-like kinase activation pathway.</title>
        <authorList>
            <person name="Erikson E."/>
            <person name="Haystead T.A."/>
            <person name="Qian Y.W."/>
            <person name="Maller J.L."/>
        </authorList>
    </citation>
    <scope>PHOSPHORYLATION AT SER-482; SER-486 AND SER-490</scope>
    <scope>MUTAGENESIS OF SER-482; SER-486 AND SER-490</scope>
</reference>
<dbReference type="EC" id="2.7.11.1"/>
<dbReference type="EMBL" id="AF100165">
    <property type="protein sequence ID" value="AAC95157.1"/>
    <property type="molecule type" value="mRNA"/>
</dbReference>
<dbReference type="EMBL" id="BC170020">
    <property type="protein sequence ID" value="AAI70020.1"/>
    <property type="molecule type" value="mRNA"/>
</dbReference>
<dbReference type="EMBL" id="BC170022">
    <property type="protein sequence ID" value="AAI70022.1"/>
    <property type="molecule type" value="mRNA"/>
</dbReference>
<dbReference type="RefSeq" id="NP_001079164.1">
    <property type="nucleotide sequence ID" value="NM_001085695.1"/>
</dbReference>
<dbReference type="SMR" id="B7ZR30"/>
<dbReference type="iPTMnet" id="B7ZR30"/>
<dbReference type="GeneID" id="373731"/>
<dbReference type="KEGG" id="xla:373731"/>
<dbReference type="AGR" id="Xenbase:XB-GENE-866353"/>
<dbReference type="CTD" id="373731"/>
<dbReference type="Xenbase" id="XB-GENE-866353">
    <property type="gene designation" value="stk10.S"/>
</dbReference>
<dbReference type="OrthoDB" id="10027016at2759"/>
<dbReference type="Proteomes" id="UP000186698">
    <property type="component" value="Chromosome 3S"/>
</dbReference>
<dbReference type="Bgee" id="373731">
    <property type="expression patterns" value="Expressed in blastula and 17 other cell types or tissues"/>
</dbReference>
<dbReference type="GO" id="GO:0005886">
    <property type="term" value="C:plasma membrane"/>
    <property type="evidence" value="ECO:0000250"/>
    <property type="project" value="UniProtKB"/>
</dbReference>
<dbReference type="GO" id="GO:0005524">
    <property type="term" value="F:ATP binding"/>
    <property type="evidence" value="ECO:0007669"/>
    <property type="project" value="UniProtKB-KW"/>
</dbReference>
<dbReference type="GO" id="GO:0042803">
    <property type="term" value="F:protein homodimerization activity"/>
    <property type="evidence" value="ECO:0000250"/>
    <property type="project" value="UniProtKB"/>
</dbReference>
<dbReference type="GO" id="GO:0106310">
    <property type="term" value="F:protein serine kinase activity"/>
    <property type="evidence" value="ECO:0007669"/>
    <property type="project" value="RHEA"/>
</dbReference>
<dbReference type="GO" id="GO:0004674">
    <property type="term" value="F:protein serine/threonine kinase activity"/>
    <property type="evidence" value="ECO:0000314"/>
    <property type="project" value="UniProtKB"/>
</dbReference>
<dbReference type="GO" id="GO:0000086">
    <property type="term" value="P:G2/M transition of mitotic cell cycle"/>
    <property type="evidence" value="ECO:0000304"/>
    <property type="project" value="UniProtKB"/>
</dbReference>
<dbReference type="GO" id="GO:0001556">
    <property type="term" value="P:oocyte maturation"/>
    <property type="evidence" value="ECO:0000314"/>
    <property type="project" value="UniProtKB"/>
</dbReference>
<dbReference type="GO" id="GO:0046777">
    <property type="term" value="P:protein autophosphorylation"/>
    <property type="evidence" value="ECO:0000314"/>
    <property type="project" value="UniProtKB"/>
</dbReference>
<dbReference type="GO" id="GO:2000401">
    <property type="term" value="P:regulation of lymphocyte migration"/>
    <property type="evidence" value="ECO:0000250"/>
    <property type="project" value="UniProtKB"/>
</dbReference>
<dbReference type="CDD" id="cd06644">
    <property type="entry name" value="STKc_STK10"/>
    <property type="match status" value="1"/>
</dbReference>
<dbReference type="FunFam" id="1.10.510.10:FF:000081">
    <property type="entry name" value="STE20-like serine/threonine-protein kinase"/>
    <property type="match status" value="1"/>
</dbReference>
<dbReference type="FunFam" id="3.30.200.20:FF:000120">
    <property type="entry name" value="STE20-like serine/threonine-protein kinase"/>
    <property type="match status" value="1"/>
</dbReference>
<dbReference type="Gene3D" id="3.30.200.20">
    <property type="entry name" value="Phosphorylase Kinase, domain 1"/>
    <property type="match status" value="1"/>
</dbReference>
<dbReference type="Gene3D" id="1.10.510.10">
    <property type="entry name" value="Transferase(Phosphotransferase) domain 1"/>
    <property type="match status" value="1"/>
</dbReference>
<dbReference type="InterPro" id="IPR011009">
    <property type="entry name" value="Kinase-like_dom_sf"/>
</dbReference>
<dbReference type="InterPro" id="IPR022165">
    <property type="entry name" value="PKK"/>
</dbReference>
<dbReference type="InterPro" id="IPR000719">
    <property type="entry name" value="Prot_kinase_dom"/>
</dbReference>
<dbReference type="InterPro" id="IPR017441">
    <property type="entry name" value="Protein_kinase_ATP_BS"/>
</dbReference>
<dbReference type="InterPro" id="IPR008271">
    <property type="entry name" value="Ser/Thr_kinase_AS"/>
</dbReference>
<dbReference type="InterPro" id="IPR051585">
    <property type="entry name" value="STE20_Ser/Thr_Kinases"/>
</dbReference>
<dbReference type="InterPro" id="IPR042743">
    <property type="entry name" value="STK10_STKc"/>
</dbReference>
<dbReference type="PANTHER" id="PTHR46538:SF2">
    <property type="entry name" value="NON-SPECIFIC SERINE_THREONINE PROTEIN KINASE"/>
    <property type="match status" value="1"/>
</dbReference>
<dbReference type="PANTHER" id="PTHR46538">
    <property type="entry name" value="PROTEIN KINASE DOMAIN-CONTAINING PROTEIN"/>
    <property type="match status" value="1"/>
</dbReference>
<dbReference type="Pfam" id="PF00069">
    <property type="entry name" value="Pkinase"/>
    <property type="match status" value="1"/>
</dbReference>
<dbReference type="Pfam" id="PF12474">
    <property type="entry name" value="PKK"/>
    <property type="match status" value="2"/>
</dbReference>
<dbReference type="SMART" id="SM00220">
    <property type="entry name" value="S_TKc"/>
    <property type="match status" value="1"/>
</dbReference>
<dbReference type="SUPFAM" id="SSF56112">
    <property type="entry name" value="Protein kinase-like (PK-like)"/>
    <property type="match status" value="1"/>
</dbReference>
<dbReference type="PROSITE" id="PS00107">
    <property type="entry name" value="PROTEIN_KINASE_ATP"/>
    <property type="match status" value="1"/>
</dbReference>
<dbReference type="PROSITE" id="PS50011">
    <property type="entry name" value="PROTEIN_KINASE_DOM"/>
    <property type="match status" value="1"/>
</dbReference>
<dbReference type="PROSITE" id="PS00108">
    <property type="entry name" value="PROTEIN_KINASE_ST"/>
    <property type="match status" value="1"/>
</dbReference>
<sequence length="950" mass="111778">MAFANFRRILRLPNFEKKRLREYEHVRRDVDPNQVWEIIGELGDGAFGKVYKAKNRETGILAAAKVIETKNEEELEDYMVEIEILATCNHHFIVKLLGAFYWEGKLWIMIEFCPGGAVDAVMLELDRGLKEPEIKTICRQMLEALAYLHSMKIIHRDLKAGNVLLTLDGDIKLADFGVSAKNVKTLQRRDSFIGTPYWMAPEVVMCETMKDAPYDYKADIWSLGITLIEMAQIEPPHHELNPMRVLLKIAKSEPPTLSSLSKWSPEFHSFLKTALDKNPETRPSAAQLLEHPFVKKASGNKPLRDLVAEAKAEVLDEIEEQGEAEEEEDSDMLSPKTKGVSQSTHVEIGKDIEREQVGNGIKPHSATSPQKTDSQADNYSQRRNNEVKNCPENGRPDAVNGKPDIIILNPLSSNLEPKRNSTAESYRGEEHSSASSQRQRSAQSAELVPNGSFDSPTRYFTNWSKRDSDSGSNSASESMDISMNLSADLSMNKETGFLSHRENRLHKKTLKRTRRFVVDGVEVSITTSKIIGDDEKKDEEMRFLRRQELRELRLLQKEEHRHQAQLTSKHSFQLEQMSRRFEQEMNSKRKFYDTELETLERHQKQQIVWMEQEHAFRRRDEAKHIKTEQERDHIKFLEQLKLRKKELKAHVEKLPRQQRRETMKVQMDGFAHKKQTEEQQFVNRQKEDLNLAMRVIVLENRKEIYNKEREFLNKKQQLLRDRESVIWELEERHLQERHQLVKQQLKDQYFLQRHELLRKHEKEQEQMQRYNQRMMEQLRLRQQQEKVRLPKNQKAEAKTRMTMFKKSLHISPSGSAAEQRDKIKQFSLQEEKRQKAERLQQQQKHEHQLMEMLAECDCNVRDLLQMQNEKCHLLVEHETQKLKSLDEHHIQLIREWRENIRPRKKAFEDELELKKEAQEMFFRLNEEVAGDPFLSNKPTRFYSFSSPEAS</sequence>
<feature type="chain" id="PRO_0000414714" description="Serine/threonine-protein kinase 10-A">
    <location>
        <begin position="1"/>
        <end position="950"/>
    </location>
</feature>
<feature type="domain" description="Protein kinase" evidence="3">
    <location>
        <begin position="36"/>
        <end position="294"/>
    </location>
</feature>
<feature type="region of interest" description="Disordered" evidence="5">
    <location>
        <begin position="319"/>
        <end position="478"/>
    </location>
</feature>
<feature type="coiled-coil region" evidence="2">
    <location>
        <begin position="634"/>
        <end position="786"/>
    </location>
</feature>
<feature type="compositionally biased region" description="Acidic residues" evidence="5">
    <location>
        <begin position="319"/>
        <end position="331"/>
    </location>
</feature>
<feature type="compositionally biased region" description="Basic and acidic residues" evidence="5">
    <location>
        <begin position="347"/>
        <end position="356"/>
    </location>
</feature>
<feature type="compositionally biased region" description="Polar residues" evidence="5">
    <location>
        <begin position="365"/>
        <end position="382"/>
    </location>
</feature>
<feature type="compositionally biased region" description="Basic and acidic residues" evidence="5">
    <location>
        <begin position="416"/>
        <end position="432"/>
    </location>
</feature>
<feature type="compositionally biased region" description="Low complexity" evidence="5">
    <location>
        <begin position="433"/>
        <end position="445"/>
    </location>
</feature>
<feature type="compositionally biased region" description="Polar residues" evidence="5">
    <location>
        <begin position="452"/>
        <end position="463"/>
    </location>
</feature>
<feature type="active site" description="Proton acceptor" evidence="3 4">
    <location>
        <position position="157"/>
    </location>
</feature>
<feature type="binding site" evidence="3">
    <location>
        <begin position="42"/>
        <end position="50"/>
    </location>
    <ligand>
        <name>ATP</name>
        <dbReference type="ChEBI" id="CHEBI:30616"/>
    </ligand>
</feature>
<feature type="binding site" evidence="3">
    <location>
        <position position="65"/>
    </location>
    <ligand>
        <name>ATP</name>
        <dbReference type="ChEBI" id="CHEBI:30616"/>
    </ligand>
</feature>
<feature type="modified residue" description="Phosphoserine; by PLK1" evidence="7">
    <location>
        <position position="482"/>
    </location>
</feature>
<feature type="modified residue" description="Phosphoserine; by PLK1" evidence="7">
    <location>
        <position position="486"/>
    </location>
</feature>
<feature type="modified residue" description="Phosphoserine; by PLK1" evidence="7">
    <location>
        <position position="490"/>
    </location>
</feature>
<feature type="mutagenesis site" description="Decreased phosphorylation by plk1/plx1; when associated with A-486 and A-490." evidence="7">
    <original>S</original>
    <variation>A</variation>
    <location>
        <position position="482"/>
    </location>
</feature>
<feature type="mutagenesis site" description="Decreased phosphorylation by plk1/plx1; when associated with A-482 and A-490." evidence="7">
    <original>S</original>
    <variation>A</variation>
    <location>
        <position position="486"/>
    </location>
</feature>
<feature type="mutagenesis site" description="Decreased phosphorylation by plk1/plx1; when associated with A-482 and A-486." evidence="7">
    <original>S</original>
    <variation>A</variation>
    <location>
        <position position="490"/>
    </location>
</feature>
<feature type="sequence conflict" description="In Ref. 1; AAC95157." evidence="9" ref="1">
    <original>R</original>
    <variation>W</variation>
    <location>
        <position position="56"/>
    </location>
</feature>
<feature type="sequence conflict" description="In Ref. 2; AAI70022." evidence="9" ref="2">
    <original>K</original>
    <variation>Q</variation>
    <location>
        <position position="262"/>
    </location>
</feature>
<feature type="sequence conflict" description="In Ref. 1; AAC95157." evidence="9" ref="1">
    <original>R</original>
    <variation>K</variation>
    <location>
        <position position="354"/>
    </location>
</feature>
<feature type="sequence conflict" description="In Ref. 1; AAC95157." evidence="9" ref="1">
    <original>K</original>
    <variation>N</variation>
    <location>
        <position position="371"/>
    </location>
</feature>
<feature type="sequence conflict" description="In Ref. 1; AAC95157." evidence="9" ref="1">
    <original>GK</original>
    <variation>RN</variation>
    <location>
        <begin position="401"/>
        <end position="402"/>
    </location>
</feature>
<feature type="sequence conflict" description="In Ref. 1; AAC95157." evidence="9" ref="1">
    <original>M</original>
    <variation>I</variation>
    <location>
        <position position="491"/>
    </location>
</feature>
<feature type="sequence conflict" description="In Ref. 2; AAI70022." evidence="9" ref="2">
    <original>H</original>
    <variation>Q</variation>
    <location>
        <position position="650"/>
    </location>
</feature>
<feature type="sequence conflict" description="In Ref. 1; AAC95157 and 2; AAI70022." evidence="9" ref="1 2">
    <original>L</original>
    <variation>P</variation>
    <location>
        <position position="934"/>
    </location>
</feature>
<name>STK10_XENLA</name>
<organism>
    <name type="scientific">Xenopus laevis</name>
    <name type="common">African clawed frog</name>
    <dbReference type="NCBI Taxonomy" id="8355"/>
    <lineage>
        <taxon>Eukaryota</taxon>
        <taxon>Metazoa</taxon>
        <taxon>Chordata</taxon>
        <taxon>Craniata</taxon>
        <taxon>Vertebrata</taxon>
        <taxon>Euteleostomi</taxon>
        <taxon>Amphibia</taxon>
        <taxon>Batrachia</taxon>
        <taxon>Anura</taxon>
        <taxon>Pipoidea</taxon>
        <taxon>Pipidae</taxon>
        <taxon>Xenopodinae</taxon>
        <taxon>Xenopus</taxon>
        <taxon>Xenopus</taxon>
    </lineage>
</organism>
<protein>
    <recommendedName>
        <fullName>Serine/threonine-protein kinase 10-A</fullName>
        <ecNumber>2.7.11.1</ecNumber>
    </recommendedName>
    <alternativeName>
        <fullName>Polo-like kinase kinase 1</fullName>
        <shortName>XPlkk1</shortName>
    </alternativeName>
</protein>
<proteinExistence type="evidence at protein level"/>
<comment type="function">
    <text evidence="6 8">May act as a polo kinase kinase by mediating phosphorylation of plk1/plx1 and subsequent activation of plk1/plx1 during oocyte maturation.</text>
</comment>
<comment type="catalytic activity">
    <reaction>
        <text>L-seryl-[protein] + ATP = O-phospho-L-seryl-[protein] + ADP + H(+)</text>
        <dbReference type="Rhea" id="RHEA:17989"/>
        <dbReference type="Rhea" id="RHEA-COMP:9863"/>
        <dbReference type="Rhea" id="RHEA-COMP:11604"/>
        <dbReference type="ChEBI" id="CHEBI:15378"/>
        <dbReference type="ChEBI" id="CHEBI:29999"/>
        <dbReference type="ChEBI" id="CHEBI:30616"/>
        <dbReference type="ChEBI" id="CHEBI:83421"/>
        <dbReference type="ChEBI" id="CHEBI:456216"/>
        <dbReference type="EC" id="2.7.11.1"/>
    </reaction>
</comment>
<comment type="catalytic activity">
    <reaction>
        <text>L-threonyl-[protein] + ATP = O-phospho-L-threonyl-[protein] + ADP + H(+)</text>
        <dbReference type="Rhea" id="RHEA:46608"/>
        <dbReference type="Rhea" id="RHEA-COMP:11060"/>
        <dbReference type="Rhea" id="RHEA-COMP:11605"/>
        <dbReference type="ChEBI" id="CHEBI:15378"/>
        <dbReference type="ChEBI" id="CHEBI:30013"/>
        <dbReference type="ChEBI" id="CHEBI:30616"/>
        <dbReference type="ChEBI" id="CHEBI:61977"/>
        <dbReference type="ChEBI" id="CHEBI:456216"/>
        <dbReference type="EC" id="2.7.11.1"/>
    </reaction>
</comment>
<comment type="subunit">
    <text evidence="1">Homodimer.</text>
</comment>
<comment type="subcellular location">
    <subcellularLocation>
        <location evidence="1">Cell membrane</location>
        <topology evidence="1">Peripheral membrane protein</topology>
    </subcellularLocation>
</comment>
<comment type="PTM">
    <text evidence="7">Autophosphorylates. Phosphorylated by plk1/plx1, suggesting the existence of a feedback loop with plk1/plx1. activation of the protein.</text>
</comment>
<comment type="similarity">
    <text evidence="9">Belongs to the protein kinase superfamily. STE Ser/Thr protein kinase family. STE20 subfamily.</text>
</comment>
<comment type="caution">
    <text evidence="10">It is unclear whether it acts as an upstream kinase for polo kinase by mediating phosphorylation of plk1/plx1 or whether it is a downstream target of plk1/plx1.</text>
</comment>
<evidence type="ECO:0000250" key="1"/>
<evidence type="ECO:0000255" key="2"/>
<evidence type="ECO:0000255" key="3">
    <source>
        <dbReference type="PROSITE-ProRule" id="PRU00159"/>
    </source>
</evidence>
<evidence type="ECO:0000255" key="4">
    <source>
        <dbReference type="PROSITE-ProRule" id="PRU10027"/>
    </source>
</evidence>
<evidence type="ECO:0000256" key="5">
    <source>
        <dbReference type="SAM" id="MobiDB-lite"/>
    </source>
</evidence>
<evidence type="ECO:0000269" key="6">
    <source>
    </source>
</evidence>
<evidence type="ECO:0000269" key="7">
    <source>
    </source>
</evidence>
<evidence type="ECO:0000269" key="8">
    <source>
    </source>
</evidence>
<evidence type="ECO:0000305" key="9"/>
<evidence type="ECO:0000305" key="10">
    <source>
    </source>
</evidence>
<keyword id="KW-0067">ATP-binding</keyword>
<keyword id="KW-0131">Cell cycle</keyword>
<keyword id="KW-1003">Cell membrane</keyword>
<keyword id="KW-0175">Coiled coil</keyword>
<keyword id="KW-0418">Kinase</keyword>
<keyword id="KW-0472">Membrane</keyword>
<keyword id="KW-0547">Nucleotide-binding</keyword>
<keyword id="KW-0597">Phosphoprotein</keyword>
<keyword id="KW-1185">Reference proteome</keyword>
<keyword id="KW-0723">Serine/threonine-protein kinase</keyword>
<keyword id="KW-0808">Transferase</keyword>
<gene>
    <name type="primary">stk10-a</name>
    <name type="synonym">plkk1</name>
</gene>